<dbReference type="EMBL" id="AE017354">
    <property type="protein sequence ID" value="AAU27448.1"/>
    <property type="molecule type" value="Genomic_DNA"/>
</dbReference>
<dbReference type="RefSeq" id="YP_095395.1">
    <property type="nucleotide sequence ID" value="NC_002942.5"/>
</dbReference>
<dbReference type="SMR" id="Q5ZVS4"/>
<dbReference type="STRING" id="272624.lpg1366"/>
<dbReference type="PaxDb" id="272624-lpg1366"/>
<dbReference type="KEGG" id="lpn:lpg1366"/>
<dbReference type="PATRIC" id="fig|272624.6.peg.1436"/>
<dbReference type="eggNOG" id="COG3022">
    <property type="taxonomic scope" value="Bacteria"/>
</dbReference>
<dbReference type="HOGENOM" id="CLU_061989_0_0_6"/>
<dbReference type="OrthoDB" id="9777133at2"/>
<dbReference type="Proteomes" id="UP000000609">
    <property type="component" value="Chromosome"/>
</dbReference>
<dbReference type="GO" id="GO:0005829">
    <property type="term" value="C:cytosol"/>
    <property type="evidence" value="ECO:0007669"/>
    <property type="project" value="TreeGrafter"/>
</dbReference>
<dbReference type="GO" id="GO:0033194">
    <property type="term" value="P:response to hydroperoxide"/>
    <property type="evidence" value="ECO:0007669"/>
    <property type="project" value="TreeGrafter"/>
</dbReference>
<dbReference type="HAMAP" id="MF_00652">
    <property type="entry name" value="UPF0246"/>
    <property type="match status" value="1"/>
</dbReference>
<dbReference type="InterPro" id="IPR005583">
    <property type="entry name" value="YaaA"/>
</dbReference>
<dbReference type="NCBIfam" id="NF002542">
    <property type="entry name" value="PRK02101.1-3"/>
    <property type="match status" value="1"/>
</dbReference>
<dbReference type="PANTHER" id="PTHR30283:SF4">
    <property type="entry name" value="PEROXIDE STRESS RESISTANCE PROTEIN YAAA"/>
    <property type="match status" value="1"/>
</dbReference>
<dbReference type="PANTHER" id="PTHR30283">
    <property type="entry name" value="PEROXIDE STRESS RESPONSE PROTEIN YAAA"/>
    <property type="match status" value="1"/>
</dbReference>
<dbReference type="Pfam" id="PF03883">
    <property type="entry name" value="H2O2_YaaD"/>
    <property type="match status" value="1"/>
</dbReference>
<comment type="similarity">
    <text evidence="1">Belongs to the UPF0246 family.</text>
</comment>
<proteinExistence type="inferred from homology"/>
<feature type="chain" id="PRO_0000262032" description="UPF0246 protein lpg1366">
    <location>
        <begin position="1"/>
        <end position="257"/>
    </location>
</feature>
<gene>
    <name type="ordered locus">lpg1366</name>
</gene>
<name>Y1366_LEGPH</name>
<accession>Q5ZVS4</accession>
<organism>
    <name type="scientific">Legionella pneumophila subsp. pneumophila (strain Philadelphia 1 / ATCC 33152 / DSM 7513)</name>
    <dbReference type="NCBI Taxonomy" id="272624"/>
    <lineage>
        <taxon>Bacteria</taxon>
        <taxon>Pseudomonadati</taxon>
        <taxon>Pseudomonadota</taxon>
        <taxon>Gammaproteobacteria</taxon>
        <taxon>Legionellales</taxon>
        <taxon>Legionellaceae</taxon>
        <taxon>Legionella</taxon>
    </lineage>
</organism>
<protein>
    <recommendedName>
        <fullName evidence="1">UPF0246 protein lpg1366</fullName>
    </recommendedName>
</protein>
<reference key="1">
    <citation type="journal article" date="2004" name="Science">
        <title>The genomic sequence of the accidental pathogen Legionella pneumophila.</title>
        <authorList>
            <person name="Chien M."/>
            <person name="Morozova I."/>
            <person name="Shi S."/>
            <person name="Sheng H."/>
            <person name="Chen J."/>
            <person name="Gomez S.M."/>
            <person name="Asamani G."/>
            <person name="Hill K."/>
            <person name="Nuara J."/>
            <person name="Feder M."/>
            <person name="Rineer J."/>
            <person name="Greenberg J.J."/>
            <person name="Steshenko V."/>
            <person name="Park S.H."/>
            <person name="Zhao B."/>
            <person name="Teplitskaya E."/>
            <person name="Edwards J.R."/>
            <person name="Pampou S."/>
            <person name="Georghiou A."/>
            <person name="Chou I.-C."/>
            <person name="Iannuccilli W."/>
            <person name="Ulz M.E."/>
            <person name="Kim D.H."/>
            <person name="Geringer-Sameth A."/>
            <person name="Goldsberry C."/>
            <person name="Morozov P."/>
            <person name="Fischer S.G."/>
            <person name="Segal G."/>
            <person name="Qu X."/>
            <person name="Rzhetsky A."/>
            <person name="Zhang P."/>
            <person name="Cayanis E."/>
            <person name="De Jong P.J."/>
            <person name="Ju J."/>
            <person name="Kalachikov S."/>
            <person name="Shuman H.A."/>
            <person name="Russo J.J."/>
        </authorList>
    </citation>
    <scope>NUCLEOTIDE SEQUENCE [LARGE SCALE GENOMIC DNA]</scope>
    <source>
        <strain>Philadelphia 1 / ATCC 33152 / DSM 7513</strain>
    </source>
</reference>
<keyword id="KW-1185">Reference proteome</keyword>
<sequence length="257" mass="29639">MLTLLSPAKKLLSISKHYSKETSNPLLLDKALQLVKIMKLKSVEQIADLMDLSKQLAELNYERYQNFDLKNNPMNHSYPALFLFQGDVYQGLNANSWKDEEIEYAQSHLGILSGLYGFLRPLDRIQPYRLEMGVNLENPAGKNLYAFWSKIVTNILNQILAEQSNPVLINLASTEYFKVVDEKKLSYPLVTINFYEQKNSELKMIGILAKKARGMMAKYIMQNRIDSIEQIKEFSESGYLFNKEISSPNSLNFIRIH</sequence>
<evidence type="ECO:0000255" key="1">
    <source>
        <dbReference type="HAMAP-Rule" id="MF_00652"/>
    </source>
</evidence>